<dbReference type="EMBL" id="BX293980">
    <property type="protein sequence ID" value="CAE77358.1"/>
    <property type="molecule type" value="Genomic_DNA"/>
</dbReference>
<dbReference type="RefSeq" id="NP_975716.1">
    <property type="nucleotide sequence ID" value="NC_005364.2"/>
</dbReference>
<dbReference type="RefSeq" id="WP_011166908.1">
    <property type="nucleotide sequence ID" value="NC_005364.2"/>
</dbReference>
<dbReference type="SMR" id="Q6MSN0"/>
<dbReference type="STRING" id="272632.MSC_0740"/>
<dbReference type="KEGG" id="mmy:MSC_0740"/>
<dbReference type="PATRIC" id="fig|272632.4.peg.797"/>
<dbReference type="eggNOG" id="COG0091">
    <property type="taxonomic scope" value="Bacteria"/>
</dbReference>
<dbReference type="HOGENOM" id="CLU_083987_3_1_14"/>
<dbReference type="Proteomes" id="UP000001016">
    <property type="component" value="Chromosome"/>
</dbReference>
<dbReference type="GO" id="GO:0022625">
    <property type="term" value="C:cytosolic large ribosomal subunit"/>
    <property type="evidence" value="ECO:0007669"/>
    <property type="project" value="TreeGrafter"/>
</dbReference>
<dbReference type="GO" id="GO:0019843">
    <property type="term" value="F:rRNA binding"/>
    <property type="evidence" value="ECO:0007669"/>
    <property type="project" value="UniProtKB-UniRule"/>
</dbReference>
<dbReference type="GO" id="GO:0003735">
    <property type="term" value="F:structural constituent of ribosome"/>
    <property type="evidence" value="ECO:0007669"/>
    <property type="project" value="InterPro"/>
</dbReference>
<dbReference type="GO" id="GO:0006412">
    <property type="term" value="P:translation"/>
    <property type="evidence" value="ECO:0007669"/>
    <property type="project" value="UniProtKB-UniRule"/>
</dbReference>
<dbReference type="CDD" id="cd00336">
    <property type="entry name" value="Ribosomal_L22"/>
    <property type="match status" value="1"/>
</dbReference>
<dbReference type="Gene3D" id="3.90.470.10">
    <property type="entry name" value="Ribosomal protein L22/L17"/>
    <property type="match status" value="1"/>
</dbReference>
<dbReference type="HAMAP" id="MF_01331_B">
    <property type="entry name" value="Ribosomal_uL22_B"/>
    <property type="match status" value="1"/>
</dbReference>
<dbReference type="InterPro" id="IPR001063">
    <property type="entry name" value="Ribosomal_uL22"/>
</dbReference>
<dbReference type="InterPro" id="IPR005727">
    <property type="entry name" value="Ribosomal_uL22_bac/chlpt-type"/>
</dbReference>
<dbReference type="InterPro" id="IPR047867">
    <property type="entry name" value="Ribosomal_uL22_bac/org-type"/>
</dbReference>
<dbReference type="InterPro" id="IPR018260">
    <property type="entry name" value="Ribosomal_uL22_CS"/>
</dbReference>
<dbReference type="InterPro" id="IPR036394">
    <property type="entry name" value="Ribosomal_uL22_sf"/>
</dbReference>
<dbReference type="NCBIfam" id="TIGR01044">
    <property type="entry name" value="rplV_bact"/>
    <property type="match status" value="1"/>
</dbReference>
<dbReference type="PANTHER" id="PTHR13501">
    <property type="entry name" value="CHLOROPLAST 50S RIBOSOMAL PROTEIN L22-RELATED"/>
    <property type="match status" value="1"/>
</dbReference>
<dbReference type="PANTHER" id="PTHR13501:SF8">
    <property type="entry name" value="LARGE RIBOSOMAL SUBUNIT PROTEIN UL22M"/>
    <property type="match status" value="1"/>
</dbReference>
<dbReference type="Pfam" id="PF00237">
    <property type="entry name" value="Ribosomal_L22"/>
    <property type="match status" value="1"/>
</dbReference>
<dbReference type="SUPFAM" id="SSF54843">
    <property type="entry name" value="Ribosomal protein L22"/>
    <property type="match status" value="1"/>
</dbReference>
<dbReference type="PROSITE" id="PS00464">
    <property type="entry name" value="RIBOSOMAL_L22"/>
    <property type="match status" value="1"/>
</dbReference>
<keyword id="KW-1185">Reference proteome</keyword>
<keyword id="KW-0687">Ribonucleoprotein</keyword>
<keyword id="KW-0689">Ribosomal protein</keyword>
<keyword id="KW-0694">RNA-binding</keyword>
<keyword id="KW-0699">rRNA-binding</keyword>
<comment type="function">
    <text evidence="1">This protein binds specifically to 23S rRNA; its binding is stimulated by other ribosomal proteins, e.g. L4, L17, and L20. It is important during the early stages of 50S assembly. It makes multiple contacts with different domains of the 23S rRNA in the assembled 50S subunit and ribosome (By similarity).</text>
</comment>
<comment type="function">
    <text evidence="1">The globular domain of the protein is located near the polypeptide exit tunnel on the outside of the subunit, while an extended beta-hairpin is found that lines the wall of the exit tunnel in the center of the 70S ribosome.</text>
</comment>
<comment type="subunit">
    <text evidence="1">Part of the 50S ribosomal subunit.</text>
</comment>
<comment type="similarity">
    <text evidence="1">Belongs to the universal ribosomal protein uL22 family.</text>
</comment>
<sequence>MEAKAKLSMIRISPRKMRLVADTIRNKAVLVAVATLKNLNKDAAEPILKLLNSAVANAVNNNGMEADKLYVKTIFVNEGPTLKRFRPRAHGRAYEIFKRTSHVVIVVSDEK</sequence>
<accession>Q6MSN0</accession>
<evidence type="ECO:0000255" key="1">
    <source>
        <dbReference type="HAMAP-Rule" id="MF_01331"/>
    </source>
</evidence>
<evidence type="ECO:0000305" key="2"/>
<proteinExistence type="inferred from homology"/>
<gene>
    <name evidence="1" type="primary">rplV</name>
    <name type="ordered locus">MSC_0740</name>
</gene>
<feature type="chain" id="PRO_0000125181" description="Large ribosomal subunit protein uL22">
    <location>
        <begin position="1"/>
        <end position="111"/>
    </location>
</feature>
<name>RL22_MYCMS</name>
<organism>
    <name type="scientific">Mycoplasma mycoides subsp. mycoides SC (strain CCUG 32753 / NCTC 10114 / PG1)</name>
    <dbReference type="NCBI Taxonomy" id="272632"/>
    <lineage>
        <taxon>Bacteria</taxon>
        <taxon>Bacillati</taxon>
        <taxon>Mycoplasmatota</taxon>
        <taxon>Mollicutes</taxon>
        <taxon>Mycoplasmataceae</taxon>
        <taxon>Mycoplasma</taxon>
    </lineage>
</organism>
<reference key="1">
    <citation type="journal article" date="2004" name="Genome Res.">
        <title>The genome sequence of Mycoplasma mycoides subsp. mycoides SC type strain PG1T, the causative agent of contagious bovine pleuropneumonia (CBPP).</title>
        <authorList>
            <person name="Westberg J."/>
            <person name="Persson A."/>
            <person name="Holmberg A."/>
            <person name="Goesmann A."/>
            <person name="Lundeberg J."/>
            <person name="Johansson K.-E."/>
            <person name="Pettersson B."/>
            <person name="Uhlen M."/>
        </authorList>
    </citation>
    <scope>NUCLEOTIDE SEQUENCE [LARGE SCALE GENOMIC DNA]</scope>
    <source>
        <strain>CCUG 32753 / NCTC 10114 / PG1</strain>
    </source>
</reference>
<protein>
    <recommendedName>
        <fullName evidence="1">Large ribosomal subunit protein uL22</fullName>
    </recommendedName>
    <alternativeName>
        <fullName evidence="2">50S ribosomal protein L22</fullName>
    </alternativeName>
</protein>